<name>RNM5_MESFL</name>
<organism>
    <name type="scientific">Mesoplasma florum (strain ATCC 33453 / NBRC 100688 / NCTC 11704 / L1)</name>
    <name type="common">Acholeplasma florum</name>
    <dbReference type="NCBI Taxonomy" id="265311"/>
    <lineage>
        <taxon>Bacteria</taxon>
        <taxon>Bacillati</taxon>
        <taxon>Mycoplasmatota</taxon>
        <taxon>Mollicutes</taxon>
        <taxon>Entomoplasmatales</taxon>
        <taxon>Entomoplasmataceae</taxon>
        <taxon>Mesoplasma</taxon>
    </lineage>
</organism>
<gene>
    <name evidence="1" type="primary">rnmV</name>
    <name type="ordered locus">Mfl004</name>
</gene>
<proteinExistence type="inferred from homology"/>
<dbReference type="EC" id="3.1.26.8" evidence="1"/>
<dbReference type="EMBL" id="AE017263">
    <property type="protein sequence ID" value="AAT75360.1"/>
    <property type="molecule type" value="Genomic_DNA"/>
</dbReference>
<dbReference type="RefSeq" id="WP_011182901.1">
    <property type="nucleotide sequence ID" value="NC_006055.1"/>
</dbReference>
<dbReference type="RefSeq" id="YP_053244.1">
    <property type="nucleotide sequence ID" value="NC_006055.1"/>
</dbReference>
<dbReference type="SMR" id="Q6F2B5"/>
<dbReference type="STRING" id="265311.Mfl004"/>
<dbReference type="PaxDb" id="265311-Mfl004"/>
<dbReference type="EnsemblBacteria" id="AAT75360">
    <property type="protein sequence ID" value="AAT75360"/>
    <property type="gene ID" value="Mfl004"/>
</dbReference>
<dbReference type="GeneID" id="2898137"/>
<dbReference type="KEGG" id="mfl:Mfl004"/>
<dbReference type="PATRIC" id="fig|265311.5.peg.4"/>
<dbReference type="eggNOG" id="COG1658">
    <property type="taxonomic scope" value="Bacteria"/>
</dbReference>
<dbReference type="HOGENOM" id="CLU_109405_1_0_14"/>
<dbReference type="OrthoDB" id="9791329at2"/>
<dbReference type="Proteomes" id="UP000006647">
    <property type="component" value="Chromosome"/>
</dbReference>
<dbReference type="GO" id="GO:0005737">
    <property type="term" value="C:cytoplasm"/>
    <property type="evidence" value="ECO:0007669"/>
    <property type="project" value="UniProtKB-SubCell"/>
</dbReference>
<dbReference type="GO" id="GO:0046872">
    <property type="term" value="F:metal ion binding"/>
    <property type="evidence" value="ECO:0007669"/>
    <property type="project" value="UniProtKB-KW"/>
</dbReference>
<dbReference type="GO" id="GO:0043822">
    <property type="term" value="F:ribonuclease M5 activity"/>
    <property type="evidence" value="ECO:0007669"/>
    <property type="project" value="UniProtKB-UniRule"/>
</dbReference>
<dbReference type="GO" id="GO:0019843">
    <property type="term" value="F:rRNA binding"/>
    <property type="evidence" value="ECO:0007669"/>
    <property type="project" value="UniProtKB-KW"/>
</dbReference>
<dbReference type="GO" id="GO:0006364">
    <property type="term" value="P:rRNA processing"/>
    <property type="evidence" value="ECO:0007669"/>
    <property type="project" value="UniProtKB-UniRule"/>
</dbReference>
<dbReference type="Gene3D" id="3.40.1360.10">
    <property type="match status" value="1"/>
</dbReference>
<dbReference type="HAMAP" id="MF_01469">
    <property type="entry name" value="RNase_M5"/>
    <property type="match status" value="1"/>
</dbReference>
<dbReference type="InterPro" id="IPR004466">
    <property type="entry name" value="RNase_M5"/>
</dbReference>
<dbReference type="InterPro" id="IPR025156">
    <property type="entry name" value="RNase_M5_C"/>
</dbReference>
<dbReference type="InterPro" id="IPR006171">
    <property type="entry name" value="TOPRIM_dom"/>
</dbReference>
<dbReference type="NCBIfam" id="TIGR00334">
    <property type="entry name" value="5S_RNA_mat_M5"/>
    <property type="match status" value="1"/>
</dbReference>
<dbReference type="PANTHER" id="PTHR39156">
    <property type="entry name" value="RIBONUCLEASE M5"/>
    <property type="match status" value="1"/>
</dbReference>
<dbReference type="PANTHER" id="PTHR39156:SF1">
    <property type="entry name" value="RIBONUCLEASE M5"/>
    <property type="match status" value="1"/>
</dbReference>
<dbReference type="Pfam" id="PF13331">
    <property type="entry name" value="DUF4093"/>
    <property type="match status" value="1"/>
</dbReference>
<dbReference type="Pfam" id="PF01751">
    <property type="entry name" value="Toprim"/>
    <property type="match status" value="1"/>
</dbReference>
<dbReference type="SMART" id="SM00493">
    <property type="entry name" value="TOPRIM"/>
    <property type="match status" value="1"/>
</dbReference>
<dbReference type="SUPFAM" id="SSF110455">
    <property type="entry name" value="Toprim domain"/>
    <property type="match status" value="1"/>
</dbReference>
<dbReference type="PROSITE" id="PS50880">
    <property type="entry name" value="TOPRIM"/>
    <property type="match status" value="1"/>
</dbReference>
<comment type="function">
    <text evidence="1">Required for correct processing of both the 5' and 3' ends of 5S rRNA precursor. Cleaves both sides of a double-stranded region yielding mature 5S rRNA in one step.</text>
</comment>
<comment type="catalytic activity">
    <reaction evidence="1">
        <text>Endonucleolytic cleavage of RNA, removing 21 and 42 nucleotides, respectively, from the 5'- and 3'-termini of a 5S-rRNA precursor.</text>
        <dbReference type="EC" id="3.1.26.8"/>
    </reaction>
</comment>
<comment type="cofactor">
    <cofactor evidence="1">
        <name>Mg(2+)</name>
        <dbReference type="ChEBI" id="CHEBI:18420"/>
    </cofactor>
    <text evidence="1">Binds two Mg(2+) per subunit.</text>
</comment>
<comment type="subcellular location">
    <subcellularLocation>
        <location evidence="1">Cytoplasm</location>
    </subcellularLocation>
</comment>
<comment type="similarity">
    <text evidence="1">Belongs to the ribonuclease M5 family.</text>
</comment>
<evidence type="ECO:0000255" key="1">
    <source>
        <dbReference type="HAMAP-Rule" id="MF_01469"/>
    </source>
</evidence>
<accession>Q6F2B5</accession>
<feature type="chain" id="PRO_0000416755" description="Ribonuclease M5">
    <location>
        <begin position="1"/>
        <end position="175"/>
    </location>
</feature>
<feature type="domain" description="Toprim" evidence="1">
    <location>
        <begin position="3"/>
        <end position="83"/>
    </location>
</feature>
<feature type="binding site" evidence="1">
    <location>
        <position position="9"/>
    </location>
    <ligand>
        <name>Mg(2+)</name>
        <dbReference type="ChEBI" id="CHEBI:18420"/>
        <label>1</label>
        <note>catalytic</note>
    </ligand>
</feature>
<feature type="binding site" evidence="1">
    <location>
        <position position="57"/>
    </location>
    <ligand>
        <name>Mg(2+)</name>
        <dbReference type="ChEBI" id="CHEBI:18420"/>
        <label>1</label>
        <note>catalytic</note>
    </ligand>
</feature>
<feature type="binding site" evidence="1">
    <location>
        <position position="57"/>
    </location>
    <ligand>
        <name>Mg(2+)</name>
        <dbReference type="ChEBI" id="CHEBI:18420"/>
        <label>2</label>
    </ligand>
</feature>
<feature type="binding site" evidence="1">
    <location>
        <position position="59"/>
    </location>
    <ligand>
        <name>Mg(2+)</name>
        <dbReference type="ChEBI" id="CHEBI:18420"/>
        <label>2</label>
    </ligand>
</feature>
<sequence length="175" mass="20076">MANEIIIVEGKSDSQKLKKIYGENLITFETNGLGIDDKKLNSIKELSKKNKIIIFTDPDGPGKKIRETIIEFLDVDVFNAFVSKQDIDKNSKKIGLAEASEEAIKKALDNLITYNKKNISISWDEYVKNDFYIKANRIIIANHFNLSEDMSSKSLFKWLNWMNLKVKDIEKIIGE</sequence>
<protein>
    <recommendedName>
        <fullName evidence="1">Ribonuclease M5</fullName>
        <ecNumber evidence="1">3.1.26.8</ecNumber>
    </recommendedName>
    <alternativeName>
        <fullName evidence="1">RNase M5</fullName>
    </alternativeName>
    <alternativeName>
        <fullName evidence="1">Ribosomal RNA terminal maturase M5</fullName>
    </alternativeName>
</protein>
<reference key="1">
    <citation type="submission" date="2004-06" db="EMBL/GenBank/DDBJ databases">
        <authorList>
            <person name="Birren B.W."/>
            <person name="Stange-Thomann N."/>
            <person name="Hafez N."/>
            <person name="DeCaprio D."/>
            <person name="Fisher S."/>
            <person name="Butler J."/>
            <person name="Elkins T."/>
            <person name="Kodira C.D."/>
            <person name="Major J."/>
            <person name="Wang S."/>
            <person name="Nicol R."/>
            <person name="Nusbaum C."/>
        </authorList>
    </citation>
    <scope>NUCLEOTIDE SEQUENCE [LARGE SCALE GENOMIC DNA]</scope>
    <source>
        <strain>ATCC 33453 / NBRC 100688 / NCTC 11704 / L1</strain>
    </source>
</reference>
<keyword id="KW-0963">Cytoplasm</keyword>
<keyword id="KW-0255">Endonuclease</keyword>
<keyword id="KW-0378">Hydrolase</keyword>
<keyword id="KW-0460">Magnesium</keyword>
<keyword id="KW-0479">Metal-binding</keyword>
<keyword id="KW-0540">Nuclease</keyword>
<keyword id="KW-1185">Reference proteome</keyword>
<keyword id="KW-0690">Ribosome biogenesis</keyword>
<keyword id="KW-0694">RNA-binding</keyword>
<keyword id="KW-0698">rRNA processing</keyword>
<keyword id="KW-0699">rRNA-binding</keyword>